<dbReference type="EMBL" id="AE017343">
    <property type="protein sequence ID" value="AAW42181.1"/>
    <property type="molecule type" value="Genomic_DNA"/>
</dbReference>
<dbReference type="RefSeq" id="XP_569488.1">
    <property type="nucleotide sequence ID" value="XM_569488.1"/>
</dbReference>
<dbReference type="SMR" id="P0CN32"/>
<dbReference type="FunCoup" id="P0CN32">
    <property type="interactions" value="335"/>
</dbReference>
<dbReference type="STRING" id="214684.P0CN32"/>
<dbReference type="PaxDb" id="214684-P0CN32"/>
<dbReference type="EnsemblFungi" id="AAW42181">
    <property type="protein sequence ID" value="AAW42181"/>
    <property type="gene ID" value="CNC01520"/>
</dbReference>
<dbReference type="GeneID" id="3256371"/>
<dbReference type="KEGG" id="cne:CNC01520"/>
<dbReference type="VEuPathDB" id="FungiDB:CNC01520"/>
<dbReference type="eggNOG" id="KOG0465">
    <property type="taxonomic scope" value="Eukaryota"/>
</dbReference>
<dbReference type="HOGENOM" id="CLU_002794_4_1_1"/>
<dbReference type="InParanoid" id="P0CN32"/>
<dbReference type="OMA" id="GQFAKVQ"/>
<dbReference type="OrthoDB" id="198619at2759"/>
<dbReference type="UniPathway" id="UPA00345"/>
<dbReference type="Proteomes" id="UP000002149">
    <property type="component" value="Chromosome 3"/>
</dbReference>
<dbReference type="GO" id="GO:0005739">
    <property type="term" value="C:mitochondrion"/>
    <property type="evidence" value="ECO:0000318"/>
    <property type="project" value="GO_Central"/>
</dbReference>
<dbReference type="GO" id="GO:0005525">
    <property type="term" value="F:GTP binding"/>
    <property type="evidence" value="ECO:0007669"/>
    <property type="project" value="UniProtKB-UniRule"/>
</dbReference>
<dbReference type="GO" id="GO:0003924">
    <property type="term" value="F:GTPase activity"/>
    <property type="evidence" value="ECO:0000318"/>
    <property type="project" value="GO_Central"/>
</dbReference>
<dbReference type="GO" id="GO:0003746">
    <property type="term" value="F:translation elongation factor activity"/>
    <property type="evidence" value="ECO:0000318"/>
    <property type="project" value="GO_Central"/>
</dbReference>
<dbReference type="GO" id="GO:0070125">
    <property type="term" value="P:mitochondrial translational elongation"/>
    <property type="evidence" value="ECO:0000318"/>
    <property type="project" value="GO_Central"/>
</dbReference>
<dbReference type="CDD" id="cd01886">
    <property type="entry name" value="EF-G"/>
    <property type="match status" value="1"/>
</dbReference>
<dbReference type="CDD" id="cd16262">
    <property type="entry name" value="EFG_III"/>
    <property type="match status" value="1"/>
</dbReference>
<dbReference type="CDD" id="cd01434">
    <property type="entry name" value="EFG_mtEFG1_IV"/>
    <property type="match status" value="1"/>
</dbReference>
<dbReference type="CDD" id="cd04097">
    <property type="entry name" value="mtEFG1_C"/>
    <property type="match status" value="1"/>
</dbReference>
<dbReference type="CDD" id="cd04091">
    <property type="entry name" value="mtEFG1_II_like"/>
    <property type="match status" value="1"/>
</dbReference>
<dbReference type="FunFam" id="3.30.230.10:FF:000003">
    <property type="entry name" value="Elongation factor G"/>
    <property type="match status" value="1"/>
</dbReference>
<dbReference type="FunFam" id="3.30.70.870:FF:000001">
    <property type="entry name" value="Elongation factor G"/>
    <property type="match status" value="1"/>
</dbReference>
<dbReference type="FunFam" id="2.40.30.10:FF:000022">
    <property type="entry name" value="Elongation factor G, mitochondrial"/>
    <property type="match status" value="1"/>
</dbReference>
<dbReference type="FunFam" id="3.30.70.240:FF:000015">
    <property type="entry name" value="Elongation factor G, mitochondrial"/>
    <property type="match status" value="1"/>
</dbReference>
<dbReference type="FunFam" id="3.40.50.300:FF:000558">
    <property type="entry name" value="Elongation factor G, mitochondrial"/>
    <property type="match status" value="1"/>
</dbReference>
<dbReference type="Gene3D" id="3.30.230.10">
    <property type="match status" value="1"/>
</dbReference>
<dbReference type="Gene3D" id="3.30.70.240">
    <property type="match status" value="1"/>
</dbReference>
<dbReference type="Gene3D" id="3.30.70.870">
    <property type="entry name" value="Elongation Factor G (Translational Gtpase), domain 3"/>
    <property type="match status" value="1"/>
</dbReference>
<dbReference type="Gene3D" id="3.40.50.300">
    <property type="entry name" value="P-loop containing nucleotide triphosphate hydrolases"/>
    <property type="match status" value="1"/>
</dbReference>
<dbReference type="Gene3D" id="2.40.30.10">
    <property type="entry name" value="Translation factors"/>
    <property type="match status" value="1"/>
</dbReference>
<dbReference type="HAMAP" id="MF_00054_B">
    <property type="entry name" value="EF_G_EF_2_B"/>
    <property type="match status" value="1"/>
</dbReference>
<dbReference type="InterPro" id="IPR041095">
    <property type="entry name" value="EFG_II"/>
</dbReference>
<dbReference type="InterPro" id="IPR009022">
    <property type="entry name" value="EFG_III"/>
</dbReference>
<dbReference type="InterPro" id="IPR035647">
    <property type="entry name" value="EFG_III/V"/>
</dbReference>
<dbReference type="InterPro" id="IPR047872">
    <property type="entry name" value="EFG_IV"/>
</dbReference>
<dbReference type="InterPro" id="IPR035649">
    <property type="entry name" value="EFG_V"/>
</dbReference>
<dbReference type="InterPro" id="IPR000640">
    <property type="entry name" value="EFG_V-like"/>
</dbReference>
<dbReference type="InterPro" id="IPR004161">
    <property type="entry name" value="EFTu-like_2"/>
</dbReference>
<dbReference type="InterPro" id="IPR031157">
    <property type="entry name" value="G_TR_CS"/>
</dbReference>
<dbReference type="InterPro" id="IPR027417">
    <property type="entry name" value="P-loop_NTPase"/>
</dbReference>
<dbReference type="InterPro" id="IPR020568">
    <property type="entry name" value="Ribosomal_Su5_D2-typ_SF"/>
</dbReference>
<dbReference type="InterPro" id="IPR014721">
    <property type="entry name" value="Ribsml_uS5_D2-typ_fold_subgr"/>
</dbReference>
<dbReference type="InterPro" id="IPR005225">
    <property type="entry name" value="Small_GTP-bd"/>
</dbReference>
<dbReference type="InterPro" id="IPR000795">
    <property type="entry name" value="T_Tr_GTP-bd_dom"/>
</dbReference>
<dbReference type="InterPro" id="IPR009000">
    <property type="entry name" value="Transl_B-barrel_sf"/>
</dbReference>
<dbReference type="InterPro" id="IPR004540">
    <property type="entry name" value="Transl_elong_EFG/EF2"/>
</dbReference>
<dbReference type="InterPro" id="IPR005517">
    <property type="entry name" value="Transl_elong_EFG/EF2_IV"/>
</dbReference>
<dbReference type="NCBIfam" id="TIGR00484">
    <property type="entry name" value="EF-G"/>
    <property type="match status" value="1"/>
</dbReference>
<dbReference type="NCBIfam" id="NF009381">
    <property type="entry name" value="PRK12740.1-5"/>
    <property type="match status" value="1"/>
</dbReference>
<dbReference type="NCBIfam" id="TIGR00231">
    <property type="entry name" value="small_GTP"/>
    <property type="match status" value="1"/>
</dbReference>
<dbReference type="PANTHER" id="PTHR43636">
    <property type="entry name" value="ELONGATION FACTOR G, MITOCHONDRIAL"/>
    <property type="match status" value="1"/>
</dbReference>
<dbReference type="PANTHER" id="PTHR43636:SF2">
    <property type="entry name" value="ELONGATION FACTOR G, MITOCHONDRIAL"/>
    <property type="match status" value="1"/>
</dbReference>
<dbReference type="Pfam" id="PF00679">
    <property type="entry name" value="EFG_C"/>
    <property type="match status" value="1"/>
</dbReference>
<dbReference type="Pfam" id="PF14492">
    <property type="entry name" value="EFG_III"/>
    <property type="match status" value="1"/>
</dbReference>
<dbReference type="Pfam" id="PF03764">
    <property type="entry name" value="EFG_IV"/>
    <property type="match status" value="1"/>
</dbReference>
<dbReference type="Pfam" id="PF00009">
    <property type="entry name" value="GTP_EFTU"/>
    <property type="match status" value="1"/>
</dbReference>
<dbReference type="Pfam" id="PF03144">
    <property type="entry name" value="GTP_EFTU_D2"/>
    <property type="match status" value="1"/>
</dbReference>
<dbReference type="PRINTS" id="PR00315">
    <property type="entry name" value="ELONGATNFCT"/>
</dbReference>
<dbReference type="SMART" id="SM00838">
    <property type="entry name" value="EFG_C"/>
    <property type="match status" value="1"/>
</dbReference>
<dbReference type="SMART" id="SM00889">
    <property type="entry name" value="EFG_IV"/>
    <property type="match status" value="1"/>
</dbReference>
<dbReference type="SUPFAM" id="SSF54980">
    <property type="entry name" value="EF-G C-terminal domain-like"/>
    <property type="match status" value="2"/>
</dbReference>
<dbReference type="SUPFAM" id="SSF52540">
    <property type="entry name" value="P-loop containing nucleoside triphosphate hydrolases"/>
    <property type="match status" value="1"/>
</dbReference>
<dbReference type="SUPFAM" id="SSF54211">
    <property type="entry name" value="Ribosomal protein S5 domain 2-like"/>
    <property type="match status" value="1"/>
</dbReference>
<dbReference type="SUPFAM" id="SSF50447">
    <property type="entry name" value="Translation proteins"/>
    <property type="match status" value="1"/>
</dbReference>
<dbReference type="PROSITE" id="PS00301">
    <property type="entry name" value="G_TR_1"/>
    <property type="match status" value="1"/>
</dbReference>
<dbReference type="PROSITE" id="PS51722">
    <property type="entry name" value="G_TR_2"/>
    <property type="match status" value="1"/>
</dbReference>
<gene>
    <name evidence="1" type="primary">MEF1</name>
    <name type="ordered locus">CNC01520</name>
</gene>
<proteinExistence type="inferred from homology"/>
<protein>
    <recommendedName>
        <fullName evidence="1">Elongation factor G, mitochondrial</fullName>
        <shortName evidence="1">EF-Gmt</shortName>
    </recommendedName>
    <alternativeName>
        <fullName evidence="1">Elongation factor G 1, mitochondrial</fullName>
        <shortName evidence="1">mEF-G 1</shortName>
    </alternativeName>
    <alternativeName>
        <fullName evidence="1">Elongation factor G1</fullName>
    </alternativeName>
</protein>
<comment type="function">
    <text evidence="1">Mitochondrial GTPase that catalyzes the GTP-dependent ribosomal translocation step during translation elongation. During this step, the ribosome changes from the pre-translocational (PRE) to the post-translocational (POST) state as the newly formed A-site-bound peptidyl-tRNA and P-site-bound deacylated tRNA move to the P and E sites, respectively. Catalyzes the coordinated movement of the two tRNA molecules, the mRNA and conformational changes in the ribosome.</text>
</comment>
<comment type="pathway">
    <text evidence="1">Protein biosynthesis; polypeptide chain elongation.</text>
</comment>
<comment type="subcellular location">
    <subcellularLocation>
        <location evidence="1">Mitochondrion</location>
    </subcellularLocation>
</comment>
<comment type="similarity">
    <text evidence="2">Belongs to the TRAFAC class translation factor GTPase superfamily. Classic translation factor GTPase family. EF-G/EF-2 subfamily.</text>
</comment>
<evidence type="ECO:0000255" key="1">
    <source>
        <dbReference type="HAMAP-Rule" id="MF_03061"/>
    </source>
</evidence>
<evidence type="ECO:0000305" key="2"/>
<sequence length="811" mass="89556">MSAIARAAARVRQQNTTPLQRPLLLQRKPVLTHTLALHASPLKPSLATSITSPNFQQSFQRRWASASATAEEGAKEEVWPQRKLPELTETDKLRLRRQRNVGISAHIDSGKTTLTERVLYYTGRIRDIHEVRGRDAVGAKMDSMELEREKGITIQSAATFADWVAPKPPTELKEGETVGNTDKQKFAINIIDTPGHVDFTIEVERALRVLDGAVLVLCAVSGVQSQTITVDRQMRRYNVPRLAFINKMDRAGSNPFRVIGQLRGKLKMNAAAVQVPIGSESDFAGVVDIVRMKAIYNEGVKGNQIVETDEIPESVRALAEEKRAELIEQLSEADETLCDLFLDEAPITPTDIAQALQRATTSLRFTPVFMGSAIKNTGVQPLLDGVCAYLPNPSEVQNQAMDATLPAHAPTIPLVPATDAPLVGLAFKLEEGRYGQLTYMRVYQGELKRGSMIYNARTGKRVKVPRLVRMHADEMEDVDAVVAGEICAMFGVECSSGDTFTDGSSTYTMTSMFVPEPVISLSIRPEGNETPNFSRALNRFQKEDPTFRVHVDSESQETIISGMGELHLDIYVERMKREYNVACVTGKPRVAFRETITEAAKFNYTHKKQSGGSGQFGRVIGSIEPMETDPDTGKDTAFENRIIGGNIPNQFIPAIQKGFQEALDRGLITGHPITGCKFVLDDGSAHAVDSNELAFRLAAIGAFREAFNKARPVVLEPVMTVEIVAPIEFQGNVIGAINQRKGTIVDTEVRDDEFTLTAEVALNDMFGYSSQLRGMTQGKGEFSMEYKNHQPVLPNIQKEMAEAFRKKQLSK</sequence>
<keyword id="KW-0251">Elongation factor</keyword>
<keyword id="KW-0342">GTP-binding</keyword>
<keyword id="KW-0496">Mitochondrion</keyword>
<keyword id="KW-0547">Nucleotide-binding</keyword>
<keyword id="KW-0648">Protein biosynthesis</keyword>
<keyword id="KW-1185">Reference proteome</keyword>
<keyword id="KW-0809">Transit peptide</keyword>
<accession>P0CN32</accession>
<accession>Q55VB1</accession>
<accession>Q5KKX4</accession>
<organism>
    <name type="scientific">Cryptococcus neoformans var. neoformans serotype D (strain JEC21 / ATCC MYA-565)</name>
    <name type="common">Filobasidiella neoformans</name>
    <dbReference type="NCBI Taxonomy" id="214684"/>
    <lineage>
        <taxon>Eukaryota</taxon>
        <taxon>Fungi</taxon>
        <taxon>Dikarya</taxon>
        <taxon>Basidiomycota</taxon>
        <taxon>Agaricomycotina</taxon>
        <taxon>Tremellomycetes</taxon>
        <taxon>Tremellales</taxon>
        <taxon>Cryptococcaceae</taxon>
        <taxon>Cryptococcus</taxon>
        <taxon>Cryptococcus neoformans species complex</taxon>
    </lineage>
</organism>
<reference key="1">
    <citation type="journal article" date="2005" name="Science">
        <title>The genome of the basidiomycetous yeast and human pathogen Cryptococcus neoformans.</title>
        <authorList>
            <person name="Loftus B.J."/>
            <person name="Fung E."/>
            <person name="Roncaglia P."/>
            <person name="Rowley D."/>
            <person name="Amedeo P."/>
            <person name="Bruno D."/>
            <person name="Vamathevan J."/>
            <person name="Miranda M."/>
            <person name="Anderson I.J."/>
            <person name="Fraser J.A."/>
            <person name="Allen J.E."/>
            <person name="Bosdet I.E."/>
            <person name="Brent M.R."/>
            <person name="Chiu R."/>
            <person name="Doering T.L."/>
            <person name="Donlin M.J."/>
            <person name="D'Souza C.A."/>
            <person name="Fox D.S."/>
            <person name="Grinberg V."/>
            <person name="Fu J."/>
            <person name="Fukushima M."/>
            <person name="Haas B.J."/>
            <person name="Huang J.C."/>
            <person name="Janbon G."/>
            <person name="Jones S.J.M."/>
            <person name="Koo H.L."/>
            <person name="Krzywinski M.I."/>
            <person name="Kwon-Chung K.J."/>
            <person name="Lengeler K.B."/>
            <person name="Maiti R."/>
            <person name="Marra M.A."/>
            <person name="Marra R.E."/>
            <person name="Mathewson C.A."/>
            <person name="Mitchell T.G."/>
            <person name="Pertea M."/>
            <person name="Riggs F.R."/>
            <person name="Salzberg S.L."/>
            <person name="Schein J.E."/>
            <person name="Shvartsbeyn A."/>
            <person name="Shin H."/>
            <person name="Shumway M."/>
            <person name="Specht C.A."/>
            <person name="Suh B.B."/>
            <person name="Tenney A."/>
            <person name="Utterback T.R."/>
            <person name="Wickes B.L."/>
            <person name="Wortman J.R."/>
            <person name="Wye N.H."/>
            <person name="Kronstad J.W."/>
            <person name="Lodge J.K."/>
            <person name="Heitman J."/>
            <person name="Davis R.W."/>
            <person name="Fraser C.M."/>
            <person name="Hyman R.W."/>
        </authorList>
    </citation>
    <scope>NUCLEOTIDE SEQUENCE [LARGE SCALE GENOMIC DNA]</scope>
    <source>
        <strain>JEC21 / ATCC MYA-565</strain>
    </source>
</reference>
<feature type="transit peptide" description="Mitochondrion" evidence="1">
    <location>
        <begin position="1"/>
        <end position="64"/>
    </location>
</feature>
<feature type="chain" id="PRO_0000385570" description="Elongation factor G, mitochondrial">
    <location>
        <begin position="65"/>
        <end position="811"/>
    </location>
</feature>
<feature type="domain" description="tr-type G">
    <location>
        <begin position="96"/>
        <end position="394"/>
    </location>
</feature>
<feature type="binding site" evidence="1">
    <location>
        <begin position="105"/>
        <end position="112"/>
    </location>
    <ligand>
        <name>GTP</name>
        <dbReference type="ChEBI" id="CHEBI:37565"/>
    </ligand>
</feature>
<feature type="binding site" evidence="1">
    <location>
        <begin position="192"/>
        <end position="196"/>
    </location>
    <ligand>
        <name>GTP</name>
        <dbReference type="ChEBI" id="CHEBI:37565"/>
    </ligand>
</feature>
<feature type="binding site" evidence="1">
    <location>
        <begin position="246"/>
        <end position="249"/>
    </location>
    <ligand>
        <name>GTP</name>
        <dbReference type="ChEBI" id="CHEBI:37565"/>
    </ligand>
</feature>
<name>EFGM_CRYNJ</name>